<gene>
    <name evidence="1" type="primary">L1</name>
</gene>
<dbReference type="EMBL" id="D21208">
    <property type="protein sequence ID" value="BAA28859.1"/>
    <property type="molecule type" value="Genomic_DNA"/>
</dbReference>
<dbReference type="EMBL" id="U12492">
    <property type="protein sequence ID" value="AAA67236.1"/>
    <property type="molecule type" value="Genomic_DNA"/>
</dbReference>
<dbReference type="SMR" id="P50825"/>
<dbReference type="Proteomes" id="UP000171341">
    <property type="component" value="Segment"/>
</dbReference>
<dbReference type="GO" id="GO:0042025">
    <property type="term" value="C:host cell nucleus"/>
    <property type="evidence" value="ECO:0007669"/>
    <property type="project" value="UniProtKB-SubCell"/>
</dbReference>
<dbReference type="GO" id="GO:0039620">
    <property type="term" value="C:T=7 icosahedral viral capsid"/>
    <property type="evidence" value="ECO:0007669"/>
    <property type="project" value="UniProtKB-UniRule"/>
</dbReference>
<dbReference type="GO" id="GO:0005198">
    <property type="term" value="F:structural molecule activity"/>
    <property type="evidence" value="ECO:0007669"/>
    <property type="project" value="UniProtKB-UniRule"/>
</dbReference>
<dbReference type="GO" id="GO:0075509">
    <property type="term" value="P:endocytosis involved in viral entry into host cell"/>
    <property type="evidence" value="ECO:0007669"/>
    <property type="project" value="UniProtKB-KW"/>
</dbReference>
<dbReference type="GO" id="GO:0019062">
    <property type="term" value="P:virion attachment to host cell"/>
    <property type="evidence" value="ECO:0007669"/>
    <property type="project" value="UniProtKB-UniRule"/>
</dbReference>
<dbReference type="Gene3D" id="2.60.175.20">
    <property type="entry name" value="Major capsid L1 (late) superfamily, Papillomavirus"/>
    <property type="match status" value="2"/>
</dbReference>
<dbReference type="HAMAP" id="MF_04002">
    <property type="entry name" value="PPV_L1"/>
    <property type="match status" value="1"/>
</dbReference>
<dbReference type="InterPro" id="IPR002210">
    <property type="entry name" value="Capsid_L1_Papillomavir"/>
</dbReference>
<dbReference type="InterPro" id="IPR036973">
    <property type="entry name" value="Capsid_L1_sf_Papillomavir"/>
</dbReference>
<dbReference type="InterPro" id="IPR011222">
    <property type="entry name" value="dsDNA_vir_gr_I_capsid"/>
</dbReference>
<dbReference type="Pfam" id="PF00500">
    <property type="entry name" value="Late_protein_L1"/>
    <property type="match status" value="1"/>
</dbReference>
<dbReference type="PRINTS" id="PR00865">
    <property type="entry name" value="HPVCAPSIDL1"/>
</dbReference>
<dbReference type="SUPFAM" id="SSF88648">
    <property type="entry name" value="Group I dsDNA viruses"/>
    <property type="match status" value="1"/>
</dbReference>
<keyword id="KW-0167">Capsid protein</keyword>
<keyword id="KW-1015">Disulfide bond</keyword>
<keyword id="KW-1048">Host nucleus</keyword>
<keyword id="KW-0945">Host-virus interaction</keyword>
<keyword id="KW-0426">Late protein</keyword>
<keyword id="KW-1145">T=7 icosahedral capsid protein</keyword>
<keyword id="KW-1161">Viral attachment to host cell</keyword>
<keyword id="KW-1162">Viral penetration into host cytoplasm</keyword>
<keyword id="KW-0946">Virion</keyword>
<keyword id="KW-1164">Virus endocytosis by host</keyword>
<keyword id="KW-1160">Virus entry into host cell</keyword>
<comment type="function">
    <text evidence="1">Forms an icosahedral capsid with a T=7 symmetry and a 50 nm diameter. The capsid is composed of 72 pentamers linked to each other by disulfide bonds and associated with L2 proteins. Binds to heparan sulfate proteoglycans on cell surface of basal layer keratinocytes to provide initial virion attachment. This binding mediates a conformational change in the virus capsid that facilitates efficient infection. The virion enters the host cell via endocytosis. During virus trafficking, L1 protein dissociates from the viral DNA and the genomic DNA is released to the host nucleus. The virion assembly takes place within the cell nucleus. Encapsulates the genomic DNA together with protein L2.</text>
</comment>
<comment type="subunit">
    <text evidence="1">Self-assembles into homopentamers. The capsid has an icosahedral symmetry and consists of 72 capsomers, with each capsomer being a pentamer of L1. Interacts with the minor capsid protein L2; this interaction is necessary for viral genome encapsidation. Interacts with protein E2; this interaction enhances E2-dependent replication and transcription activation.</text>
</comment>
<comment type="subcellular location">
    <subcellularLocation>
        <location evidence="1">Virion</location>
    </subcellularLocation>
    <subcellularLocation>
        <location evidence="1">Host nucleus</location>
    </subcellularLocation>
</comment>
<comment type="similarity">
    <text evidence="1">Belongs to the papillomaviridae L1 protein family.</text>
</comment>
<reference key="1">
    <citation type="journal article" date="1998" name="Virus Genes">
        <title>Nucleotide sequence and phylogenetic classification of human papillomavirus type 67.</title>
        <authorList>
            <person name="Kirii Y."/>
            <person name="Matsukura T."/>
        </authorList>
    </citation>
    <scope>NUCLEOTIDE SEQUENCE [GENOMIC DNA]</scope>
</reference>
<reference key="2">
    <citation type="journal article" date="1994" name="J. Infect. Dis.">
        <title>Identification and assessment of known and novel human papillomaviruses by polymerase chain reaction amplification, restriction fragment length polymorphisms, nucleotide sequence, and phylogenetic algorithms.</title>
        <authorList>
            <person name="Bernard H.U."/>
            <person name="Chan S.-Y."/>
            <person name="Manos M.M."/>
            <person name="Ong C.K."/>
            <person name="Villa L.L."/>
            <person name="Delius H."/>
            <person name="Peyton C.L."/>
            <person name="Bauer H.M."/>
            <person name="Wheeler C.M."/>
        </authorList>
    </citation>
    <scope>NUCLEOTIDE SEQUENCE [GENOMIC DNA] OF 346-495</scope>
</reference>
<feature type="chain" id="PRO_0000133549" description="Major capsid protein L1">
    <location>
        <begin position="1"/>
        <end position="529"/>
    </location>
</feature>
<feature type="region of interest" description="Disordered" evidence="2">
    <location>
        <begin position="506"/>
        <end position="529"/>
    </location>
</feature>
<feature type="compositionally biased region" description="Low complexity" evidence="2">
    <location>
        <begin position="512"/>
        <end position="521"/>
    </location>
</feature>
<feature type="disulfide bond" description="Interchain (with C-457)" evidence="1">
    <location>
        <position position="205"/>
    </location>
</feature>
<feature type="disulfide bond" description="Interchain (with C-205)" evidence="1">
    <location>
        <position position="457"/>
    </location>
</feature>
<feature type="sequence conflict" description="In Ref. 2; AAA67236." evidence="3" ref="2">
    <original>C</original>
    <variation>Y</variation>
    <location>
        <position position="375"/>
    </location>
</feature>
<feature type="sequence conflict" description="In Ref. 2; AAA67236." evidence="3" ref="2">
    <original>E</original>
    <variation>G</variation>
    <location>
        <position position="378"/>
    </location>
</feature>
<feature type="sequence conflict" description="In Ref. 2; AAA67236." evidence="3" ref="2">
    <original>F</original>
    <variation>Y</variation>
    <location>
        <position position="491"/>
    </location>
</feature>
<accession>P50825</accession>
<accession>O90730</accession>
<organismHost>
    <name type="scientific">Homo sapiens</name>
    <name type="common">Human</name>
    <dbReference type="NCBI Taxonomy" id="9606"/>
</organismHost>
<sequence>MYLFMVVILFYTLVIFYVAGVNGFHIFLQMSVWRPSEATVYLPPVPVSKVVSTDEYVSRTSIYYYAGSSRLLAVGHPYFSIPNPSNTKKVLVPKVSGLQYRVFRVRLPDPNKFGFPDTSFYNPDTQRLVWACVGIEIGRGQPLGVGISGHPLLNKFDDTETNNKYPSQPGTDNRECLSMDAKQTQLCIIGCKPPTGEHWGKGTPCSGNSNGPGACPPLELMNTVIEDGDMIDTGFGCMDFKSLQANKSDVPLDICTSICKYPDYLGMASEAYGDSLFFFLRREQMFVRHLFNRAGKLGEDVPTDLYFKGSANTSALQTSAFFPTPSGSMVSSESQLFNKPYWLQRAQGHNNGICWGNQIFVTVVDTTRSTNMTLCSEEKSEATYKNENFKEYLRHVEEYDLQFIFQLCKISLTANVMQYIHTMNPDILEDWQFGLTPPPSGNLQDTYRFVTSQAITCQKTSPPTAKEDPLKKYSFWEINLKEKFSADLDQFPLGRKFLLQAGFTAKPKLKRSSPSSSSSSSAKRKKVKR</sequence>
<proteinExistence type="inferred from homology"/>
<name>VL1_HPV67</name>
<evidence type="ECO:0000255" key="1">
    <source>
        <dbReference type="HAMAP-Rule" id="MF_04002"/>
    </source>
</evidence>
<evidence type="ECO:0000256" key="2">
    <source>
        <dbReference type="SAM" id="MobiDB-lite"/>
    </source>
</evidence>
<evidence type="ECO:0000305" key="3"/>
<protein>
    <recommendedName>
        <fullName evidence="1">Major capsid protein L1</fullName>
    </recommendedName>
</protein>
<organism>
    <name type="scientific">Human papillomavirus 67</name>
    <dbReference type="NCBI Taxonomy" id="37120"/>
    <lineage>
        <taxon>Viruses</taxon>
        <taxon>Monodnaviria</taxon>
        <taxon>Shotokuvirae</taxon>
        <taxon>Cossaviricota</taxon>
        <taxon>Papovaviricetes</taxon>
        <taxon>Zurhausenvirales</taxon>
        <taxon>Papillomaviridae</taxon>
        <taxon>Firstpapillomavirinae</taxon>
        <taxon>Alphapapillomavirus</taxon>
        <taxon>Alphapapillomavirus 9</taxon>
    </lineage>
</organism>